<name>YOHO_SALPB</name>
<evidence type="ECO:0000255" key="1">
    <source>
        <dbReference type="HAMAP-Rule" id="MF_01362"/>
    </source>
</evidence>
<reference key="1">
    <citation type="submission" date="2007-11" db="EMBL/GenBank/DDBJ databases">
        <authorList>
            <consortium name="The Salmonella enterica serovar Paratyphi B Genome Sequencing Project"/>
            <person name="McClelland M."/>
            <person name="Sanderson E.K."/>
            <person name="Porwollik S."/>
            <person name="Spieth J."/>
            <person name="Clifton W.S."/>
            <person name="Fulton R."/>
            <person name="Cordes M."/>
            <person name="Wollam A."/>
            <person name="Shah N."/>
            <person name="Pepin K."/>
            <person name="Bhonagiri V."/>
            <person name="Nash W."/>
            <person name="Johnson M."/>
            <person name="Thiruvilangam P."/>
            <person name="Wilson R."/>
        </authorList>
    </citation>
    <scope>NUCLEOTIDE SEQUENCE [LARGE SCALE GENOMIC DNA]</scope>
    <source>
        <strain>ATCC BAA-1250 / SPB7</strain>
    </source>
</reference>
<feature type="chain" id="PRO_1000086965" description="UPF0387 membrane protein YohO">
    <location>
        <begin position="1"/>
        <end position="35"/>
    </location>
</feature>
<feature type="transmembrane region" description="Helical" evidence="1">
    <location>
        <begin position="6"/>
        <end position="26"/>
    </location>
</feature>
<comment type="subcellular location">
    <subcellularLocation>
        <location evidence="1">Cell inner membrane</location>
        <topology evidence="1">Single-pass membrane protein</topology>
    </subcellularLocation>
</comment>
<comment type="similarity">
    <text evidence="1">Belongs to the UPF0387 family.</text>
</comment>
<gene>
    <name evidence="1" type="primary">yohO</name>
    <name type="ordered locus">SPAB_00859</name>
</gene>
<dbReference type="EMBL" id="CP000886">
    <property type="protein sequence ID" value="ABX66283.1"/>
    <property type="molecule type" value="Genomic_DNA"/>
</dbReference>
<dbReference type="RefSeq" id="WP_001261696.1">
    <property type="nucleotide sequence ID" value="NC_010102.1"/>
</dbReference>
<dbReference type="KEGG" id="spq:SPAB_00859"/>
<dbReference type="PATRIC" id="fig|1016998.12.peg.805"/>
<dbReference type="HOGENOM" id="CLU_220259_0_0_6"/>
<dbReference type="BioCyc" id="SENT1016998:SPAB_RS03535-MONOMER"/>
<dbReference type="Proteomes" id="UP000008556">
    <property type="component" value="Chromosome"/>
</dbReference>
<dbReference type="GO" id="GO:0005886">
    <property type="term" value="C:plasma membrane"/>
    <property type="evidence" value="ECO:0007669"/>
    <property type="project" value="UniProtKB-SubCell"/>
</dbReference>
<dbReference type="HAMAP" id="MF_01362">
    <property type="entry name" value="UPF0387"/>
    <property type="match status" value="1"/>
</dbReference>
<dbReference type="InterPro" id="IPR020870">
    <property type="entry name" value="UPF0387_membrane"/>
</dbReference>
<dbReference type="NCBIfam" id="NF010225">
    <property type="entry name" value="PRK13681.1"/>
    <property type="match status" value="1"/>
</dbReference>
<organism>
    <name type="scientific">Salmonella paratyphi B (strain ATCC BAA-1250 / SPB7)</name>
    <dbReference type="NCBI Taxonomy" id="1016998"/>
    <lineage>
        <taxon>Bacteria</taxon>
        <taxon>Pseudomonadati</taxon>
        <taxon>Pseudomonadota</taxon>
        <taxon>Gammaproteobacteria</taxon>
        <taxon>Enterobacterales</taxon>
        <taxon>Enterobacteriaceae</taxon>
        <taxon>Salmonella</taxon>
    </lineage>
</organism>
<accession>A9N7H5</accession>
<protein>
    <recommendedName>
        <fullName evidence="1">UPF0387 membrane protein YohO</fullName>
    </recommendedName>
</protein>
<sequence length="35" mass="3580">MRVAKIGVIALFLLMAIGGIGGVMLAGYSFILRAG</sequence>
<keyword id="KW-0997">Cell inner membrane</keyword>
<keyword id="KW-1003">Cell membrane</keyword>
<keyword id="KW-0472">Membrane</keyword>
<keyword id="KW-0812">Transmembrane</keyword>
<keyword id="KW-1133">Transmembrane helix</keyword>
<proteinExistence type="inferred from homology"/>